<name>HTF_BLEDI</name>
<accession>P85565</accession>
<proteinExistence type="evidence at protein level"/>
<sequence length="10" mass="1092">QVNFSPGWGT</sequence>
<feature type="peptide" id="PRO_0000378637" description="Hypertrehalosaemic factor" evidence="3">
    <location>
        <begin position="1"/>
        <end position="10"/>
    </location>
</feature>
<feature type="modified residue" description="Pyrrolidone carboxylic acid" evidence="3">
    <location>
        <position position="1"/>
    </location>
</feature>
<feature type="modified residue" description="Threonine amide" evidence="3">
    <location>
        <position position="10"/>
    </location>
</feature>
<dbReference type="GO" id="GO:0005576">
    <property type="term" value="C:extracellular region"/>
    <property type="evidence" value="ECO:0007669"/>
    <property type="project" value="UniProtKB-SubCell"/>
</dbReference>
<dbReference type="GO" id="GO:0005179">
    <property type="term" value="F:hormone activity"/>
    <property type="evidence" value="ECO:0007669"/>
    <property type="project" value="UniProtKB-KW"/>
</dbReference>
<dbReference type="GO" id="GO:0007218">
    <property type="term" value="P:neuropeptide signaling pathway"/>
    <property type="evidence" value="ECO:0007669"/>
    <property type="project" value="UniProtKB-KW"/>
</dbReference>
<dbReference type="InterPro" id="IPR002047">
    <property type="entry name" value="Adipokinetic_hormone_CS"/>
</dbReference>
<dbReference type="PROSITE" id="PS00256">
    <property type="entry name" value="AKH"/>
    <property type="match status" value="1"/>
</dbReference>
<protein>
    <recommendedName>
        <fullName evidence="1">Hypertrehalosaemic factor</fullName>
    </recommendedName>
    <alternativeName>
        <fullName evidence="4">Adipokinetic hormone 1</fullName>
        <shortName evidence="4">BleDi-AKH-1</shortName>
    </alternativeName>
    <alternativeName>
        <fullName evidence="1">Hypertrehalosaemic neuropeptide</fullName>
    </alternativeName>
</protein>
<comment type="function">
    <text evidence="5">Hypertrehalosaemic factors are neuropeptides that elevate the level of trehalose in the hemolymph (trehalose is the major carbohydrate in the hemolymph of insects).</text>
</comment>
<comment type="subcellular location">
    <subcellularLocation>
        <location evidence="5">Secreted</location>
    </subcellularLocation>
</comment>
<comment type="similarity">
    <text evidence="2">Belongs to the AKH/HRTH/RPCH family.</text>
</comment>
<reference evidence="5" key="1">
    <citation type="journal article" date="2009" name="BMC Evol. Biol.">
        <title>A proteomic approach for studying insect phylogeny: CAPA peptides of ancient insect taxa (Dictyoptera, Blattoptera) as a test case.</title>
        <authorList>
            <person name="Roth S."/>
            <person name="Fromm B."/>
            <person name="Gaede G."/>
            <person name="Predel R."/>
        </authorList>
    </citation>
    <scope>PROTEIN SEQUENCE</scope>
    <scope>PYROGLUTAMATE FORMATION AT GLN-1</scope>
    <scope>AMIDATION AT THR-10</scope>
    <source>
        <tissue evidence="3">Corpora cardiaca</tissue>
    </source>
</reference>
<keyword id="KW-0027">Amidation</keyword>
<keyword id="KW-0903">Direct protein sequencing</keyword>
<keyword id="KW-0372">Hormone</keyword>
<keyword id="KW-0527">Neuropeptide</keyword>
<keyword id="KW-0873">Pyrrolidone carboxylic acid</keyword>
<keyword id="KW-0964">Secreted</keyword>
<evidence type="ECO:0000250" key="1">
    <source>
        <dbReference type="UniProtKB" id="P67790"/>
    </source>
</evidence>
<evidence type="ECO:0000255" key="2"/>
<evidence type="ECO:0000269" key="3">
    <source>
    </source>
</evidence>
<evidence type="ECO:0000303" key="4">
    <source>
    </source>
</evidence>
<evidence type="ECO:0000305" key="5"/>
<organism>
    <name type="scientific">Blepharodera discoidalis</name>
    <name type="common">Cockroach</name>
    <dbReference type="NCBI Taxonomy" id="521524"/>
    <lineage>
        <taxon>Eukaryota</taxon>
        <taxon>Metazoa</taxon>
        <taxon>Ecdysozoa</taxon>
        <taxon>Arthropoda</taxon>
        <taxon>Hexapoda</taxon>
        <taxon>Insecta</taxon>
        <taxon>Pterygota</taxon>
        <taxon>Neoptera</taxon>
        <taxon>Polyneoptera</taxon>
        <taxon>Dictyoptera</taxon>
        <taxon>Blattodea</taxon>
        <taxon>Blaberoidea</taxon>
        <taxon>Blaberidae</taxon>
        <taxon>Epilamprinae</taxon>
        <taxon>Blepharodera</taxon>
    </lineage>
</organism>